<keyword id="KW-0472">Membrane</keyword>
<keyword id="KW-0496">Mitochondrion</keyword>
<keyword id="KW-0999">Mitochondrion inner membrane</keyword>
<keyword id="KW-1185">Reference proteome</keyword>
<keyword id="KW-0809">Transit peptide</keyword>
<feature type="transit peptide" description="Mitochondrion" evidence="1">
    <location>
        <begin position="1"/>
        <end position="33"/>
    </location>
</feature>
<feature type="chain" id="PRO_0000021656" description="Inner membrane mitoribosome receptor MBA1, mitochondrial">
    <location>
        <begin position="34"/>
        <end position="278"/>
    </location>
</feature>
<comment type="function">
    <text evidence="2 4 7 8">Mitochondrial inner membrane-associated mitoribosome receptor that spatially aligns the mitoribosome exit tunnel with the membrane insertion machinery and allows cotranslational protein membrane insertion.</text>
</comment>
<comment type="subunit">
    <text evidence="4 6 7 8">Interacts with OXA1 and MDM38. Binds to mitoribosomes in order to recruit them to the mitochondrial inner membrane.</text>
</comment>
<comment type="subcellular location">
    <subcellularLocation>
        <location evidence="2 4 8 9">Mitochondrion inner membrane</location>
        <topology evidence="2 4 8 9">Peripheral membrane protein</topology>
        <orientation evidence="2 4 8 9">Matrix side</orientation>
    </subcellularLocation>
    <text evidence="4 6">Localizes near the mitoribosome exit tunnel.</text>
</comment>
<comment type="disruption phenotype">
    <text evidence="4 5 7 8 9">Leads to a reduced growth rate on non-fermentable carbon sources, which is more pronounced at high temperature (PubMed:18727146, PubMed:8690083). Shows defects in the membrane insertion of nascent chains resulting in the accumulation of the precursor form of subunit 2 of cytochrome oxidase (PubMed:20427570, PubMed:25609543).</text>
</comment>
<comment type="miscellaneous">
    <text evidence="3">Present with 2720 molecules/cell in log phase SD medium.</text>
</comment>
<sequence length="278" mass="31811">MSVLRSTCLFFPPRSLLISFNKRRLFSTSRLILNKESETTKKKDKSKQQDFNPRHLGVAAEIFIPSAYKNLPNVFAHPLIVANALIRRLYTFGLNSVQVALFRFQSGIKPSFLLWKNKAIETYINVNTSFAHKNLSDIKGLVSLWVQEALEARSRQLPGNATLDWQLIKFNAVPKLVSVQPIMIPGMPLEHLQLVYKFDTKQRLIKVNQQTKKTETLDRDVVDYIAFLCDATTNDMILMGSLFESKPNDKLPKSYEDDAKVAIHRMKVNGDIYRLPPS</sequence>
<dbReference type="EMBL" id="U02073">
    <property type="protein sequence ID" value="AAB60279.1"/>
    <property type="molecule type" value="Genomic_DNA"/>
</dbReference>
<dbReference type="EMBL" id="Z36054">
    <property type="protein sequence ID" value="CAA85146.1"/>
    <property type="molecule type" value="Genomic_DNA"/>
</dbReference>
<dbReference type="EMBL" id="AY557862">
    <property type="protein sequence ID" value="AAS56188.1"/>
    <property type="molecule type" value="Genomic_DNA"/>
</dbReference>
<dbReference type="EMBL" id="BK006936">
    <property type="protein sequence ID" value="DAA07300.1"/>
    <property type="molecule type" value="Genomic_DNA"/>
</dbReference>
<dbReference type="PIR" id="S46057">
    <property type="entry name" value="S46057"/>
</dbReference>
<dbReference type="RefSeq" id="NP_009744.3">
    <property type="nucleotide sequence ID" value="NM_001178533.3"/>
</dbReference>
<dbReference type="SMR" id="P38300"/>
<dbReference type="BioGRID" id="32883">
    <property type="interactions" value="247"/>
</dbReference>
<dbReference type="DIP" id="DIP-5701N"/>
<dbReference type="FunCoup" id="P38300">
    <property type="interactions" value="109"/>
</dbReference>
<dbReference type="IntAct" id="P38300">
    <property type="interactions" value="11"/>
</dbReference>
<dbReference type="MINT" id="P38300"/>
<dbReference type="STRING" id="4932.YBR185C"/>
<dbReference type="PaxDb" id="4932-YBR185C"/>
<dbReference type="PeptideAtlas" id="P38300"/>
<dbReference type="EnsemblFungi" id="YBR185C_mRNA">
    <property type="protein sequence ID" value="YBR185C"/>
    <property type="gene ID" value="YBR185C"/>
</dbReference>
<dbReference type="GeneID" id="852483"/>
<dbReference type="KEGG" id="sce:YBR185C"/>
<dbReference type="AGR" id="SGD:S000000389"/>
<dbReference type="SGD" id="S000000389">
    <property type="gene designation" value="MBA1"/>
</dbReference>
<dbReference type="VEuPathDB" id="FungiDB:YBR185C"/>
<dbReference type="eggNOG" id="ENOG502QWPQ">
    <property type="taxonomic scope" value="Eukaryota"/>
</dbReference>
<dbReference type="HOGENOM" id="CLU_076697_0_0_1"/>
<dbReference type="InParanoid" id="P38300"/>
<dbReference type="OMA" id="MMIPGRP"/>
<dbReference type="OrthoDB" id="19619at2759"/>
<dbReference type="BioCyc" id="YEAST:G3O-29128-MONOMER"/>
<dbReference type="BioGRID-ORCS" id="852483">
    <property type="hits" value="0 hits in 10 CRISPR screens"/>
</dbReference>
<dbReference type="PRO" id="PR:P38300"/>
<dbReference type="Proteomes" id="UP000002311">
    <property type="component" value="Chromosome II"/>
</dbReference>
<dbReference type="RNAct" id="P38300">
    <property type="molecule type" value="protein"/>
</dbReference>
<dbReference type="GO" id="GO:0005743">
    <property type="term" value="C:mitochondrial inner membrane"/>
    <property type="evidence" value="ECO:0000314"/>
    <property type="project" value="SGD"/>
</dbReference>
<dbReference type="GO" id="GO:0005739">
    <property type="term" value="C:mitochondrion"/>
    <property type="evidence" value="ECO:0007005"/>
    <property type="project" value="SGD"/>
</dbReference>
<dbReference type="GO" id="GO:0097177">
    <property type="term" value="F:mitochondrial ribosome binding"/>
    <property type="evidence" value="ECO:0000314"/>
    <property type="project" value="SGD"/>
</dbReference>
<dbReference type="GO" id="GO:0043022">
    <property type="term" value="F:ribosome binding"/>
    <property type="evidence" value="ECO:0000318"/>
    <property type="project" value="GO_Central"/>
</dbReference>
<dbReference type="GO" id="GO:0007007">
    <property type="term" value="P:inner mitochondrial membrane organization"/>
    <property type="evidence" value="ECO:0000314"/>
    <property type="project" value="SGD"/>
</dbReference>
<dbReference type="GO" id="GO:0070131">
    <property type="term" value="P:positive regulation of mitochondrial translation"/>
    <property type="evidence" value="ECO:0000316"/>
    <property type="project" value="SGD"/>
</dbReference>
<dbReference type="GO" id="GO:0032979">
    <property type="term" value="P:protein insertion into mitochondrial inner membrane from matrix"/>
    <property type="evidence" value="ECO:0000315"/>
    <property type="project" value="SGD"/>
</dbReference>
<dbReference type="FunFam" id="3.10.450.240:FF:000009">
    <property type="entry name" value="Protein MBA1, mitochondrial"/>
    <property type="match status" value="1"/>
</dbReference>
<dbReference type="Gene3D" id="3.10.450.240">
    <property type="match status" value="1"/>
</dbReference>
<dbReference type="InterPro" id="IPR024621">
    <property type="entry name" value="Mba1"/>
</dbReference>
<dbReference type="InterPro" id="IPR012483">
    <property type="entry name" value="Mba1_Saccharomycetales"/>
</dbReference>
<dbReference type="PANTHER" id="PTHR13333">
    <property type="entry name" value="M-AAA PROTEASE-INTERACTING PROTEIN 1, MITOCHONDRIAL"/>
    <property type="match status" value="1"/>
</dbReference>
<dbReference type="PANTHER" id="PTHR13333:SF5">
    <property type="entry name" value="M-AAA PROTEASE-INTERACTING PROTEIN 1, MITOCHONDRIAL"/>
    <property type="match status" value="1"/>
</dbReference>
<dbReference type="Pfam" id="PF07961">
    <property type="entry name" value="MBA1"/>
    <property type="match status" value="1"/>
</dbReference>
<dbReference type="PIRSF" id="PIRSF022613">
    <property type="entry name" value="MBA1"/>
    <property type="match status" value="1"/>
</dbReference>
<evidence type="ECO:0000255" key="1"/>
<evidence type="ECO:0000269" key="2">
    <source>
    </source>
</evidence>
<evidence type="ECO:0000269" key="3">
    <source>
    </source>
</evidence>
<evidence type="ECO:0000269" key="4">
    <source>
    </source>
</evidence>
<evidence type="ECO:0000269" key="5">
    <source>
    </source>
</evidence>
<evidence type="ECO:0000269" key="6">
    <source>
    </source>
</evidence>
<evidence type="ECO:0000269" key="7">
    <source>
    </source>
</evidence>
<evidence type="ECO:0000269" key="8">
    <source>
    </source>
</evidence>
<evidence type="ECO:0000269" key="9">
    <source>
    </source>
</evidence>
<evidence type="ECO:0000303" key="10">
    <source>
    </source>
</evidence>
<evidence type="ECO:0000303" key="11">
    <source>
    </source>
</evidence>
<gene>
    <name evidence="11" type="primary">MBA1</name>
    <name type="ordered locus">YBR185C</name>
    <name type="ORF">YBR1307</name>
</gene>
<proteinExistence type="evidence at protein level"/>
<protein>
    <recommendedName>
        <fullName evidence="10">Inner membrane mitoribosome receptor MBA1, mitochondrial</fullName>
    </recommendedName>
    <alternativeName>
        <fullName evidence="11">Multi-copy bypass of AFG3 protein</fullName>
    </alternativeName>
</protein>
<organism>
    <name type="scientific">Saccharomyces cerevisiae (strain ATCC 204508 / S288c)</name>
    <name type="common">Baker's yeast</name>
    <dbReference type="NCBI Taxonomy" id="559292"/>
    <lineage>
        <taxon>Eukaryota</taxon>
        <taxon>Fungi</taxon>
        <taxon>Dikarya</taxon>
        <taxon>Ascomycota</taxon>
        <taxon>Saccharomycotina</taxon>
        <taxon>Saccharomycetes</taxon>
        <taxon>Saccharomycetales</taxon>
        <taxon>Saccharomycetaceae</taxon>
        <taxon>Saccharomyces</taxon>
    </lineage>
</organism>
<reference key="1">
    <citation type="journal article" date="1994" name="Yeast">
        <title>A 12.5 kb fragment of the yeast chromosome II contains two adjacent genes encoding ribosomal proteins and six putative new genes, one of which encodes a putative transcriptional factor.</title>
        <authorList>
            <person name="Demolis N."/>
            <person name="Jacquet M."/>
            <person name="Mallet L."/>
        </authorList>
    </citation>
    <scope>NUCLEOTIDE SEQUENCE [GENOMIC DNA]</scope>
    <source>
        <strain>ATCC 204508 / S288c</strain>
    </source>
</reference>
<reference key="2">
    <citation type="journal article" date="1994" name="EMBO J.">
        <title>Complete DNA sequence of yeast chromosome II.</title>
        <authorList>
            <person name="Feldmann H."/>
            <person name="Aigle M."/>
            <person name="Aljinovic G."/>
            <person name="Andre B."/>
            <person name="Baclet M.C."/>
            <person name="Barthe C."/>
            <person name="Baur A."/>
            <person name="Becam A.-M."/>
            <person name="Biteau N."/>
            <person name="Boles E."/>
            <person name="Brandt T."/>
            <person name="Brendel M."/>
            <person name="Brueckner M."/>
            <person name="Bussereau F."/>
            <person name="Christiansen C."/>
            <person name="Contreras R."/>
            <person name="Crouzet M."/>
            <person name="Cziepluch C."/>
            <person name="Demolis N."/>
            <person name="Delaveau T."/>
            <person name="Doignon F."/>
            <person name="Domdey H."/>
            <person name="Duesterhus S."/>
            <person name="Dubois E."/>
            <person name="Dujon B."/>
            <person name="El Bakkoury M."/>
            <person name="Entian K.-D."/>
            <person name="Feuermann M."/>
            <person name="Fiers W."/>
            <person name="Fobo G.M."/>
            <person name="Fritz C."/>
            <person name="Gassenhuber J."/>
            <person name="Glansdorff N."/>
            <person name="Goffeau A."/>
            <person name="Grivell L.A."/>
            <person name="de Haan M."/>
            <person name="Hein C."/>
            <person name="Herbert C.J."/>
            <person name="Hollenberg C.P."/>
            <person name="Holmstroem K."/>
            <person name="Jacq C."/>
            <person name="Jacquet M."/>
            <person name="Jauniaux J.-C."/>
            <person name="Jonniaux J.-L."/>
            <person name="Kallesoee T."/>
            <person name="Kiesau P."/>
            <person name="Kirchrath L."/>
            <person name="Koetter P."/>
            <person name="Korol S."/>
            <person name="Liebl S."/>
            <person name="Logghe M."/>
            <person name="Lohan A.J.E."/>
            <person name="Louis E.J."/>
            <person name="Li Z.Y."/>
            <person name="Maat M.J."/>
            <person name="Mallet L."/>
            <person name="Mannhaupt G."/>
            <person name="Messenguy F."/>
            <person name="Miosga T."/>
            <person name="Molemans F."/>
            <person name="Mueller S."/>
            <person name="Nasr F."/>
            <person name="Obermaier B."/>
            <person name="Perea J."/>
            <person name="Pierard A."/>
            <person name="Piravandi E."/>
            <person name="Pohl F.M."/>
            <person name="Pohl T.M."/>
            <person name="Potier S."/>
            <person name="Proft M."/>
            <person name="Purnelle B."/>
            <person name="Ramezani Rad M."/>
            <person name="Rieger M."/>
            <person name="Rose M."/>
            <person name="Schaaff-Gerstenschlaeger I."/>
            <person name="Scherens B."/>
            <person name="Schwarzlose C."/>
            <person name="Skala J."/>
            <person name="Slonimski P.P."/>
            <person name="Smits P.H.M."/>
            <person name="Souciet J.-L."/>
            <person name="Steensma H.Y."/>
            <person name="Stucka R."/>
            <person name="Urrestarazu L.A."/>
            <person name="van der Aart Q.J.M."/>
            <person name="Van Dyck L."/>
            <person name="Vassarotti A."/>
            <person name="Vetter I."/>
            <person name="Vierendeels F."/>
            <person name="Vissers S."/>
            <person name="Wagner G."/>
            <person name="de Wergifosse P."/>
            <person name="Wolfe K.H."/>
            <person name="Zagulski M."/>
            <person name="Zimmermann F.K."/>
            <person name="Mewes H.-W."/>
            <person name="Kleine K."/>
        </authorList>
    </citation>
    <scope>NUCLEOTIDE SEQUENCE [LARGE SCALE GENOMIC DNA]</scope>
    <source>
        <strain>ATCC 204508 / S288c</strain>
    </source>
</reference>
<reference key="3">
    <citation type="journal article" date="2014" name="G3 (Bethesda)">
        <title>The reference genome sequence of Saccharomyces cerevisiae: Then and now.</title>
        <authorList>
            <person name="Engel S.R."/>
            <person name="Dietrich F.S."/>
            <person name="Fisk D.G."/>
            <person name="Binkley G."/>
            <person name="Balakrishnan R."/>
            <person name="Costanzo M.C."/>
            <person name="Dwight S.S."/>
            <person name="Hitz B.C."/>
            <person name="Karra K."/>
            <person name="Nash R.S."/>
            <person name="Weng S."/>
            <person name="Wong E.D."/>
            <person name="Lloyd P."/>
            <person name="Skrzypek M.S."/>
            <person name="Miyasato S.R."/>
            <person name="Simison M."/>
            <person name="Cherry J.M."/>
        </authorList>
    </citation>
    <scope>GENOME REANNOTATION</scope>
    <source>
        <strain>ATCC 204508 / S288c</strain>
    </source>
</reference>
<reference key="4">
    <citation type="journal article" date="2007" name="Genome Res.">
        <title>Approaching a complete repository of sequence-verified protein-encoding clones for Saccharomyces cerevisiae.</title>
        <authorList>
            <person name="Hu Y."/>
            <person name="Rolfs A."/>
            <person name="Bhullar B."/>
            <person name="Murthy T.V.S."/>
            <person name="Zhu C."/>
            <person name="Berger M.F."/>
            <person name="Camargo A.A."/>
            <person name="Kelley F."/>
            <person name="McCarron S."/>
            <person name="Jepson D."/>
            <person name="Richardson A."/>
            <person name="Raphael J."/>
            <person name="Moreira D."/>
            <person name="Taycher E."/>
            <person name="Zuo D."/>
            <person name="Mohr S."/>
            <person name="Kane M.F."/>
            <person name="Williamson J."/>
            <person name="Simpson A.J.G."/>
            <person name="Bulyk M.L."/>
            <person name="Harlow E."/>
            <person name="Marsischky G."/>
            <person name="Kolodner R.D."/>
            <person name="LaBaer J."/>
        </authorList>
    </citation>
    <scope>NUCLEOTIDE SEQUENCE [GENOMIC DNA]</scope>
    <source>
        <strain>ATCC 204508 / S288c</strain>
    </source>
</reference>
<reference key="5">
    <citation type="journal article" date="1996" name="FEBS Lett.">
        <title>MBA1 encodes a mitochondrial membrane-associated protein required for biogenesis of the respiratory chain.</title>
        <authorList>
            <person name="Rep M."/>
            <person name="Grivell L.A."/>
        </authorList>
    </citation>
    <scope>SUBCELLULAR LOCATION</scope>
    <scope>DISRUPTION PHENOTYPE</scope>
</reference>
<reference key="6">
    <citation type="journal article" date="2001" name="J. Cell Biol.">
        <title>Mba1, a novel component of the mitochondrial protein export machinery of the yeast Saccharomyces cerevisiae.</title>
        <authorList>
            <person name="Preuss M."/>
            <person name="Leonhard K."/>
            <person name="Hell K."/>
            <person name="Stuart R.A."/>
            <person name="Neupert W."/>
            <person name="Herrmann J.M."/>
        </authorList>
    </citation>
    <scope>SUBCELLULAR LOCATION</scope>
    <scope>FUNCTION</scope>
</reference>
<reference key="7">
    <citation type="journal article" date="2003" name="Nature">
        <title>Global analysis of protein expression in yeast.</title>
        <authorList>
            <person name="Ghaemmaghami S."/>
            <person name="Huh W.-K."/>
            <person name="Bower K."/>
            <person name="Howson R.W."/>
            <person name="Belle A."/>
            <person name="Dephoure N."/>
            <person name="O'Shea E.K."/>
            <person name="Weissman J.S."/>
        </authorList>
    </citation>
    <scope>LEVEL OF PROTEIN EXPRESSION [LARGE SCALE ANALYSIS]</scope>
</reference>
<reference key="8">
    <citation type="journal article" date="2006" name="EMBO J.">
        <title>Mba1, a membrane-associated ribosome receptor in mitochondria.</title>
        <authorList>
            <person name="Ott M."/>
            <person name="Prestele M."/>
            <person name="Bauerschmitt H."/>
            <person name="Funes S."/>
            <person name="Bonnefoy N."/>
            <person name="Herrmann J.M."/>
        </authorList>
    </citation>
    <scope>SUBCELLULAR LOCATION</scope>
    <scope>FUNCTION</scope>
    <scope>BINDING TO MITORIBOSOMES</scope>
    <scope>DISRUPTION PHENOTYPE</scope>
</reference>
<reference key="9">
    <citation type="journal article" date="2008" name="Yeast">
        <title>Exometabolic and transcriptional response in relation to phenotype and gene copy number in respiration-related deletion mutants of S. cerevisiae.</title>
        <authorList>
            <person name="Pir P."/>
            <person name="Kirdar B."/>
            <person name="Hayes A."/>
            <person name="Onsan Z.I."/>
            <person name="Ulgen K.O."/>
            <person name="Oliver S.G."/>
        </authorList>
    </citation>
    <scope>DISRUPTION PHENOTYPE</scope>
</reference>
<reference key="10">
    <citation type="journal article" date="2010" name="J. Biol. Chem.">
        <title>Proteins at the polypeptide tunnel exit of the yeast mitochondrial ribosome.</title>
        <authorList>
            <person name="Gruschke S."/>
            <person name="Grone K."/>
            <person name="Heublein M."/>
            <person name="Holz S."/>
            <person name="Israel L."/>
            <person name="Imhof A."/>
            <person name="Herrmann J.M."/>
            <person name="Ott M."/>
        </authorList>
    </citation>
    <scope>SUBCELLULAR LOCATION</scope>
    <scope>BINDING TO MITORIBOSOMES AND NASCENT CHAINS</scope>
</reference>
<reference key="11">
    <citation type="journal article" date="2010" name="Mol. Biol. Cell">
        <title>Ribosome-binding proteins Mdm38 and Mba1 display overlapping functions for regulation of mitochondrial translation.</title>
        <authorList>
            <person name="Bauerschmitt H."/>
            <person name="Mick D.U."/>
            <person name="Deckers M."/>
            <person name="Vollmer C."/>
            <person name="Funes S."/>
            <person name="Kehrein K."/>
            <person name="Ott M."/>
            <person name="Rehling P."/>
            <person name="Herrmann J.M."/>
        </authorList>
    </citation>
    <scope>BINDING TO MITORIBOSOMES</scope>
    <scope>INTERACTION WITH MDM38</scope>
    <scope>DISRUPTION PHENOTYPE</scope>
    <scope>FUNCTION</scope>
</reference>
<reference key="12">
    <citation type="journal article" date="2015" name="Nat. Commun.">
        <title>Organization of the mitochondrial translation machinery studied in situ by cryoelectron tomography.</title>
        <authorList>
            <person name="Pfeffer S."/>
            <person name="Woellhaf M.W."/>
            <person name="Herrmann J.M."/>
            <person name="Forster F."/>
        </authorList>
    </citation>
    <scope>SUBCELLULAR LOCATION</scope>
    <scope>FUNCTION</scope>
    <scope>DISRUPTION PHENOTYPE</scope>
    <scope>INTERACTION WITH OXA1</scope>
</reference>
<accession>P38300</accession>
<accession>D6VQI0</accession>
<name>MBA1_YEAST</name>